<organism>
    <name type="scientific">Saccharomyces cerevisiae (strain ATCC 204508 / S288c)</name>
    <name type="common">Baker's yeast</name>
    <dbReference type="NCBI Taxonomy" id="559292"/>
    <lineage>
        <taxon>Eukaryota</taxon>
        <taxon>Fungi</taxon>
        <taxon>Dikarya</taxon>
        <taxon>Ascomycota</taxon>
        <taxon>Saccharomycotina</taxon>
        <taxon>Saccharomycetes</taxon>
        <taxon>Saccharomycetales</taxon>
        <taxon>Saccharomycetaceae</taxon>
        <taxon>Saccharomyces</taxon>
    </lineage>
</organism>
<reference key="1">
    <citation type="journal article" date="1994" name="Yeast">
        <title>DNA sequencing of a 36.2 kb fragment located between the FAS1 and LAP loci of chromosome XI of Saccharomyces cerevisiae.</title>
        <authorList>
            <person name="Vandenbol M."/>
            <person name="Bolle P.-A."/>
            <person name="Dion C."/>
            <person name="Portetelle D."/>
            <person name="Hilger F."/>
        </authorList>
    </citation>
    <scope>NUCLEOTIDE SEQUENCE [GENOMIC DNA]</scope>
    <source>
        <strain>ATCC 204508 / S288c</strain>
    </source>
</reference>
<reference key="2">
    <citation type="journal article" date="1994" name="Nature">
        <title>Complete DNA sequence of yeast chromosome XI.</title>
        <authorList>
            <person name="Dujon B."/>
            <person name="Alexandraki D."/>
            <person name="Andre B."/>
            <person name="Ansorge W."/>
            <person name="Baladron V."/>
            <person name="Ballesta J.P.G."/>
            <person name="Banrevi A."/>
            <person name="Bolle P.-A."/>
            <person name="Bolotin-Fukuhara M."/>
            <person name="Bossier P."/>
            <person name="Bou G."/>
            <person name="Boyer J."/>
            <person name="Buitrago M.J."/>
            <person name="Cheret G."/>
            <person name="Colleaux L."/>
            <person name="Daignan-Fornier B."/>
            <person name="del Rey F."/>
            <person name="Dion C."/>
            <person name="Domdey H."/>
            <person name="Duesterhoeft A."/>
            <person name="Duesterhus S."/>
            <person name="Entian K.-D."/>
            <person name="Erfle H."/>
            <person name="Esteban P.F."/>
            <person name="Feldmann H."/>
            <person name="Fernandes L."/>
            <person name="Fobo G.M."/>
            <person name="Fritz C."/>
            <person name="Fukuhara H."/>
            <person name="Gabel C."/>
            <person name="Gaillon L."/>
            <person name="Garcia-Cantalejo J.M."/>
            <person name="Garcia-Ramirez J.J."/>
            <person name="Gent M.E."/>
            <person name="Ghazvini M."/>
            <person name="Goffeau A."/>
            <person name="Gonzalez A."/>
            <person name="Grothues D."/>
            <person name="Guerreiro P."/>
            <person name="Hegemann J.H."/>
            <person name="Hewitt N."/>
            <person name="Hilger F."/>
            <person name="Hollenberg C.P."/>
            <person name="Horaitis O."/>
            <person name="Indge K.J."/>
            <person name="Jacquier A."/>
            <person name="James C.M."/>
            <person name="Jauniaux J.-C."/>
            <person name="Jimenez A."/>
            <person name="Keuchel H."/>
            <person name="Kirchrath L."/>
            <person name="Kleine K."/>
            <person name="Koetter P."/>
            <person name="Legrain P."/>
            <person name="Liebl S."/>
            <person name="Louis E.J."/>
            <person name="Maia e Silva A."/>
            <person name="Marck C."/>
            <person name="Monnier A.-L."/>
            <person name="Moestl D."/>
            <person name="Mueller S."/>
            <person name="Obermaier B."/>
            <person name="Oliver S.G."/>
            <person name="Pallier C."/>
            <person name="Pascolo S."/>
            <person name="Pfeiffer F."/>
            <person name="Philippsen P."/>
            <person name="Planta R.J."/>
            <person name="Pohl F.M."/>
            <person name="Pohl T.M."/>
            <person name="Poehlmann R."/>
            <person name="Portetelle D."/>
            <person name="Purnelle B."/>
            <person name="Puzos V."/>
            <person name="Ramezani Rad M."/>
            <person name="Rasmussen S.W."/>
            <person name="Remacha M.A."/>
            <person name="Revuelta J.L."/>
            <person name="Richard G.-F."/>
            <person name="Rieger M."/>
            <person name="Rodrigues-Pousada C."/>
            <person name="Rose M."/>
            <person name="Rupp T."/>
            <person name="Santos M.A."/>
            <person name="Schwager C."/>
            <person name="Sensen C."/>
            <person name="Skala J."/>
            <person name="Soares H."/>
            <person name="Sor F."/>
            <person name="Stegemann J."/>
            <person name="Tettelin H."/>
            <person name="Thierry A."/>
            <person name="Tzermia M."/>
            <person name="Urrestarazu L.A."/>
            <person name="van Dyck L."/>
            <person name="van Vliet-Reedijk J.C."/>
            <person name="Valens M."/>
            <person name="Vandenbol M."/>
            <person name="Vilela C."/>
            <person name="Vissers S."/>
            <person name="von Wettstein D."/>
            <person name="Voss H."/>
            <person name="Wiemann S."/>
            <person name="Xu G."/>
            <person name="Zimmermann J."/>
            <person name="Haasemann M."/>
            <person name="Becker I."/>
            <person name="Mewes H.-W."/>
        </authorList>
    </citation>
    <scope>NUCLEOTIDE SEQUENCE [LARGE SCALE GENOMIC DNA]</scope>
    <source>
        <strain>ATCC 204508 / S288c</strain>
    </source>
</reference>
<reference key="3">
    <citation type="journal article" date="2014" name="G3 (Bethesda)">
        <title>The reference genome sequence of Saccharomyces cerevisiae: Then and now.</title>
        <authorList>
            <person name="Engel S.R."/>
            <person name="Dietrich F.S."/>
            <person name="Fisk D.G."/>
            <person name="Binkley G."/>
            <person name="Balakrishnan R."/>
            <person name="Costanzo M.C."/>
            <person name="Dwight S.S."/>
            <person name="Hitz B.C."/>
            <person name="Karra K."/>
            <person name="Nash R.S."/>
            <person name="Weng S."/>
            <person name="Wong E.D."/>
            <person name="Lloyd P."/>
            <person name="Skrzypek M.S."/>
            <person name="Miyasato S.R."/>
            <person name="Simison M."/>
            <person name="Cherry J.M."/>
        </authorList>
    </citation>
    <scope>GENOME REANNOTATION</scope>
    <source>
        <strain>ATCC 204508 / S288c</strain>
    </source>
</reference>
<reference key="4">
    <citation type="journal article" date="2007" name="Genome Res.">
        <title>Approaching a complete repository of sequence-verified protein-encoding clones for Saccharomyces cerevisiae.</title>
        <authorList>
            <person name="Hu Y."/>
            <person name="Rolfs A."/>
            <person name="Bhullar B."/>
            <person name="Murthy T.V.S."/>
            <person name="Zhu C."/>
            <person name="Berger M.F."/>
            <person name="Camargo A.A."/>
            <person name="Kelley F."/>
            <person name="McCarron S."/>
            <person name="Jepson D."/>
            <person name="Richardson A."/>
            <person name="Raphael J."/>
            <person name="Moreira D."/>
            <person name="Taycher E."/>
            <person name="Zuo D."/>
            <person name="Mohr S."/>
            <person name="Kane M.F."/>
            <person name="Williamson J."/>
            <person name="Simpson A.J.G."/>
            <person name="Bulyk M.L."/>
            <person name="Harlow E."/>
            <person name="Marsischky G."/>
            <person name="Kolodner R.D."/>
            <person name="LaBaer J."/>
        </authorList>
    </citation>
    <scope>NUCLEOTIDE SEQUENCE [GENOMIC DNA]</scope>
    <source>
        <strain>ATCC 204508 / S288c</strain>
    </source>
</reference>
<accession>P36061</accession>
<sequence>MSPPCNCRLLLGFLIKWRATASTTCGSGLFMLTSSVPLLQEVCDASGTLACTASLFTSSGGFFSKPPVVPLDFLLLLLLLLLPLLLPPLPSVKGEPDACEIPVLPPLLFFLLLLLCVLPEPLETSFPFISAMQSLIRFLINFASHSFTTDHRSFLFHSLTSTNDNTRKRPDRVTNPFTISRSTFSNNVVYIRIYSYSSPKYTFPC</sequence>
<name>YKO7_YEAST</name>
<gene>
    <name type="ordered locus">YKL147C</name>
    <name type="ORF">YKL601</name>
</gene>
<proteinExistence type="uncertain"/>
<evidence type="ECO:0000305" key="1"/>
<evidence type="ECO:0000305" key="2">
    <source>
    </source>
</evidence>
<dbReference type="EMBL" id="Z26877">
    <property type="protein sequence ID" value="CAA81507.1"/>
    <property type="molecule type" value="Genomic_DNA"/>
</dbReference>
<dbReference type="EMBL" id="Z28146">
    <property type="protein sequence ID" value="CAA81987.1"/>
    <property type="molecule type" value="Genomic_DNA"/>
</dbReference>
<dbReference type="EMBL" id="AY558359">
    <property type="protein sequence ID" value="AAS56685.1"/>
    <property type="molecule type" value="Genomic_DNA"/>
</dbReference>
<dbReference type="PIR" id="S37804">
    <property type="entry name" value="S37804"/>
</dbReference>
<dbReference type="SMR" id="P36061"/>
<dbReference type="IntAct" id="P36061">
    <property type="interactions" value="2"/>
</dbReference>
<dbReference type="MINT" id="P36061"/>
<dbReference type="iPTMnet" id="P36061"/>
<dbReference type="PaxDb" id="4932-YKL147C"/>
<dbReference type="EnsemblFungi" id="YKL147C_mRNA">
    <property type="protein sequence ID" value="YKL147C"/>
    <property type="gene ID" value="YKL147C"/>
</dbReference>
<dbReference type="AGR" id="SGD:S000001630"/>
<dbReference type="SGD" id="S000001630">
    <property type="gene designation" value="YKL147C"/>
</dbReference>
<dbReference type="HOGENOM" id="CLU_1338469_0_0_1"/>
<comment type="miscellaneous">
    <text evidence="1">Partially overlaps AVT3.</text>
</comment>
<comment type="caution">
    <text evidence="2">Product of a dubious gene prediction unlikely to encode a functional protein. Because of that it is not part of the S.cerevisiae S288c complete/reference proteome set.</text>
</comment>
<feature type="chain" id="PRO_0000203146" description="Putative uncharacterized protein YKL147C">
    <location>
        <begin position="1"/>
        <end position="205"/>
    </location>
</feature>
<protein>
    <recommendedName>
        <fullName>Putative uncharacterized protein YKL147C</fullName>
    </recommendedName>
</protein>